<keyword id="KW-0413">Isomerase</keyword>
<keyword id="KW-0479">Metal-binding</keyword>
<keyword id="KW-0520">NAD</keyword>
<keyword id="KW-0521">NADP</keyword>
<keyword id="KW-0547">Nucleotide-binding</keyword>
<keyword id="KW-0630">Potassium</keyword>
<dbReference type="EC" id="5.1.99.6" evidence="1"/>
<dbReference type="EMBL" id="CP002652">
    <property type="protein sequence ID" value="AEB74196.1"/>
    <property type="molecule type" value="Genomic_DNA"/>
</dbReference>
<dbReference type="RefSeq" id="WP_013728724.1">
    <property type="nucleotide sequence ID" value="NC_015428.1"/>
</dbReference>
<dbReference type="SMR" id="F4FTW6"/>
<dbReference type="KEGG" id="lbh:Lbuc_1950"/>
<dbReference type="eggNOG" id="COG0062">
    <property type="taxonomic scope" value="Bacteria"/>
</dbReference>
<dbReference type="HOGENOM" id="CLU_024853_0_1_9"/>
<dbReference type="GO" id="GO:0046872">
    <property type="term" value="F:metal ion binding"/>
    <property type="evidence" value="ECO:0007669"/>
    <property type="project" value="UniProtKB-KW"/>
</dbReference>
<dbReference type="GO" id="GO:0052856">
    <property type="term" value="F:NAD(P)HX epimerase activity"/>
    <property type="evidence" value="ECO:0007669"/>
    <property type="project" value="UniProtKB-UniRule"/>
</dbReference>
<dbReference type="GO" id="GO:0000166">
    <property type="term" value="F:nucleotide binding"/>
    <property type="evidence" value="ECO:0007669"/>
    <property type="project" value="UniProtKB-KW"/>
</dbReference>
<dbReference type="Gene3D" id="3.40.50.10260">
    <property type="entry name" value="YjeF N-terminal domain"/>
    <property type="match status" value="1"/>
</dbReference>
<dbReference type="HAMAP" id="MF_01966">
    <property type="entry name" value="NADHX_epimerase"/>
    <property type="match status" value="1"/>
</dbReference>
<dbReference type="InterPro" id="IPR004443">
    <property type="entry name" value="YjeF_N_dom"/>
</dbReference>
<dbReference type="InterPro" id="IPR036652">
    <property type="entry name" value="YjeF_N_dom_sf"/>
</dbReference>
<dbReference type="InterPro" id="IPR032976">
    <property type="entry name" value="YJEFN_prot_NAXE-like"/>
</dbReference>
<dbReference type="NCBIfam" id="TIGR00197">
    <property type="entry name" value="yjeF_nterm"/>
    <property type="match status" value="1"/>
</dbReference>
<dbReference type="PANTHER" id="PTHR13232">
    <property type="entry name" value="NAD(P)H-HYDRATE EPIMERASE"/>
    <property type="match status" value="1"/>
</dbReference>
<dbReference type="PANTHER" id="PTHR13232:SF10">
    <property type="entry name" value="NAD(P)H-HYDRATE EPIMERASE"/>
    <property type="match status" value="1"/>
</dbReference>
<dbReference type="Pfam" id="PF03853">
    <property type="entry name" value="YjeF_N"/>
    <property type="match status" value="1"/>
</dbReference>
<dbReference type="SUPFAM" id="SSF64153">
    <property type="entry name" value="YjeF N-terminal domain-like"/>
    <property type="match status" value="1"/>
</dbReference>
<dbReference type="PROSITE" id="PS51385">
    <property type="entry name" value="YJEF_N"/>
    <property type="match status" value="1"/>
</dbReference>
<proteinExistence type="inferred from homology"/>
<protein>
    <recommendedName>
        <fullName evidence="1">NAD(P)H-hydrate epimerase</fullName>
        <ecNumber evidence="1">5.1.99.6</ecNumber>
    </recommendedName>
    <alternativeName>
        <fullName evidence="1">NAD(P)HX epimerase</fullName>
    </alternativeName>
</protein>
<comment type="function">
    <text evidence="1">Catalyzes the epimerization of the S- and R-forms of NAD(P)HX, a damaged form of NAD(P)H that is a result of enzymatic or heat-dependent hydration. This is a prerequisite for the S-specific NAD(P)H-hydrate dehydratase to allow the repair of both epimers of NAD(P)HX.</text>
</comment>
<comment type="catalytic activity">
    <reaction evidence="1">
        <text>(6R)-NADHX = (6S)-NADHX</text>
        <dbReference type="Rhea" id="RHEA:32215"/>
        <dbReference type="ChEBI" id="CHEBI:64074"/>
        <dbReference type="ChEBI" id="CHEBI:64075"/>
        <dbReference type="EC" id="5.1.99.6"/>
    </reaction>
</comment>
<comment type="catalytic activity">
    <reaction evidence="1">
        <text>(6R)-NADPHX = (6S)-NADPHX</text>
        <dbReference type="Rhea" id="RHEA:32227"/>
        <dbReference type="ChEBI" id="CHEBI:64076"/>
        <dbReference type="ChEBI" id="CHEBI:64077"/>
        <dbReference type="EC" id="5.1.99.6"/>
    </reaction>
</comment>
<comment type="cofactor">
    <cofactor evidence="1">
        <name>K(+)</name>
        <dbReference type="ChEBI" id="CHEBI:29103"/>
    </cofactor>
    <text evidence="1">Binds 1 potassium ion per subunit.</text>
</comment>
<comment type="similarity">
    <text evidence="1">Belongs to the NnrE/AIBP family.</text>
</comment>
<reference key="1">
    <citation type="journal article" date="2011" name="J. Bacteriol.">
        <title>Complete genome sequence of Lactobacillus buchneri NRRL B-30929, a novel strain from a commercial ethanol plant.</title>
        <authorList>
            <consortium name="US DOE Joint Genome Institute"/>
            <person name="Liu S."/>
            <person name="Leathers T.D."/>
            <person name="Copeland A."/>
            <person name="Chertkov O."/>
            <person name="Goodwin L."/>
            <person name="Mills D.A."/>
        </authorList>
    </citation>
    <scope>NUCLEOTIDE SEQUENCE [LARGE SCALE GENOMIC DNA]</scope>
    <source>
        <strain>NRRL B-30929</strain>
    </source>
</reference>
<evidence type="ECO:0000255" key="1">
    <source>
        <dbReference type="HAMAP-Rule" id="MF_01966"/>
    </source>
</evidence>
<organism>
    <name type="scientific">Lentilactobacillus buchneri (strain NRRL B-30929)</name>
    <name type="common">Lactobacillus buchneri</name>
    <dbReference type="NCBI Taxonomy" id="511437"/>
    <lineage>
        <taxon>Bacteria</taxon>
        <taxon>Bacillati</taxon>
        <taxon>Bacillota</taxon>
        <taxon>Bacilli</taxon>
        <taxon>Lactobacillales</taxon>
        <taxon>Lactobacillaceae</taxon>
        <taxon>Lentilactobacillus</taxon>
    </lineage>
</organism>
<name>NNRE_LENBN</name>
<gene>
    <name evidence="1" type="primary">nnrE</name>
    <name type="ordered locus">Lbuc_1950</name>
</gene>
<sequence>MTQAITVEESRELDDKTINKIGIPSLVLMERAGLKIYENMLDNKDLDLSNVLILAGTGNNGGDGLVVARLLATHGYQVSILTVGNPDHASEDHLAQARICNYYQIPKVFMNADFNKFTTLVDALFGSGLSRNVGGDFATIIDKANASTAKIHAIDIPSGLNGDTGDVMGTAIKAISTSTVAYPKVGMLKDQAKPYTGKIYVDDIGIYRGNAFENE</sequence>
<feature type="chain" id="PRO_0000416356" description="NAD(P)H-hydrate epimerase">
    <location>
        <begin position="1"/>
        <end position="215"/>
    </location>
</feature>
<feature type="domain" description="YjeF N-terminal" evidence="1">
    <location>
        <begin position="10"/>
        <end position="212"/>
    </location>
</feature>
<feature type="binding site" evidence="1">
    <location>
        <begin position="59"/>
        <end position="63"/>
    </location>
    <ligand>
        <name>(6S)-NADPHX</name>
        <dbReference type="ChEBI" id="CHEBI:64076"/>
    </ligand>
</feature>
<feature type="binding site" evidence="1">
    <location>
        <position position="60"/>
    </location>
    <ligand>
        <name>K(+)</name>
        <dbReference type="ChEBI" id="CHEBI:29103"/>
    </ligand>
</feature>
<feature type="binding site" evidence="1">
    <location>
        <position position="122"/>
    </location>
    <ligand>
        <name>K(+)</name>
        <dbReference type="ChEBI" id="CHEBI:29103"/>
    </ligand>
</feature>
<feature type="binding site" evidence="1">
    <location>
        <begin position="126"/>
        <end position="132"/>
    </location>
    <ligand>
        <name>(6S)-NADPHX</name>
        <dbReference type="ChEBI" id="CHEBI:64076"/>
    </ligand>
</feature>
<feature type="binding site" evidence="1">
    <location>
        <position position="155"/>
    </location>
    <ligand>
        <name>(6S)-NADPHX</name>
        <dbReference type="ChEBI" id="CHEBI:64076"/>
    </ligand>
</feature>
<feature type="binding site" evidence="1">
    <location>
        <position position="158"/>
    </location>
    <ligand>
        <name>K(+)</name>
        <dbReference type="ChEBI" id="CHEBI:29103"/>
    </ligand>
</feature>
<accession>F4FTW6</accession>